<dbReference type="EMBL" id="AK158833">
    <property type="protein sequence ID" value="BAE34687.1"/>
    <property type="molecule type" value="mRNA"/>
</dbReference>
<dbReference type="EMBL" id="AK159309">
    <property type="protein sequence ID" value="BAE34977.1"/>
    <property type="molecule type" value="mRNA"/>
</dbReference>
<dbReference type="EMBL" id="BC025865">
    <property type="protein sequence ID" value="AAH25865.1"/>
    <property type="molecule type" value="mRNA"/>
</dbReference>
<dbReference type="CCDS" id="CCDS29585.1">
    <molecule id="Q8R105-1"/>
</dbReference>
<dbReference type="RefSeq" id="NP_001348887.1">
    <molecule id="Q8R105-1"/>
    <property type="nucleotide sequence ID" value="NM_001361958.1"/>
</dbReference>
<dbReference type="RefSeq" id="NP_001348888.1">
    <molecule id="Q8R105-2"/>
    <property type="nucleotide sequence ID" value="NM_001361959.1"/>
</dbReference>
<dbReference type="RefSeq" id="NP_001348890.1">
    <molecule id="Q8R105-1"/>
    <property type="nucleotide sequence ID" value="NM_001361961.1"/>
</dbReference>
<dbReference type="RefSeq" id="NP_001348891.1">
    <molecule id="Q8R105-1"/>
    <property type="nucleotide sequence ID" value="NM_001361962.1"/>
</dbReference>
<dbReference type="RefSeq" id="NP_001348892.1">
    <molecule id="Q8R105-2"/>
    <property type="nucleotide sequence ID" value="NM_001361963.1"/>
</dbReference>
<dbReference type="RefSeq" id="NP_001348893.1">
    <molecule id="Q8R105-1"/>
    <property type="nucleotide sequence ID" value="NM_001361964.1"/>
</dbReference>
<dbReference type="RefSeq" id="NP_852068.1">
    <molecule id="Q8R105-1"/>
    <property type="nucleotide sequence ID" value="NM_181403.3"/>
</dbReference>
<dbReference type="RefSeq" id="XP_006526635.1">
    <property type="nucleotide sequence ID" value="XM_006526572.3"/>
</dbReference>
<dbReference type="RefSeq" id="XP_006526636.1">
    <property type="nucleotide sequence ID" value="XM_006526573.3"/>
</dbReference>
<dbReference type="RefSeq" id="XP_006526637.1">
    <molecule id="Q8R105-1"/>
    <property type="nucleotide sequence ID" value="XM_006526574.5"/>
</dbReference>
<dbReference type="RefSeq" id="XP_006526638.1">
    <property type="nucleotide sequence ID" value="XM_006526575.1"/>
</dbReference>
<dbReference type="RefSeq" id="XP_011245412.1">
    <property type="nucleotide sequence ID" value="XM_011247110.2"/>
</dbReference>
<dbReference type="RefSeq" id="XP_036017274.1">
    <molecule id="Q8R105-2"/>
    <property type="nucleotide sequence ID" value="XM_036161381.1"/>
</dbReference>
<dbReference type="RefSeq" id="XP_036017275.1">
    <molecule id="Q8R105-2"/>
    <property type="nucleotide sequence ID" value="XM_036161382.1"/>
</dbReference>
<dbReference type="SMR" id="Q8R105"/>
<dbReference type="BioGRID" id="223239">
    <property type="interactions" value="13"/>
</dbReference>
<dbReference type="FunCoup" id="Q8R105">
    <property type="interactions" value="659"/>
</dbReference>
<dbReference type="IntAct" id="Q8R105">
    <property type="interactions" value="1"/>
</dbReference>
<dbReference type="STRING" id="10090.ENSMUSP00000158500"/>
<dbReference type="GlyGen" id="Q8R105">
    <property type="glycosylation" value="5 sites, 1 N-linked glycan (1 site)"/>
</dbReference>
<dbReference type="iPTMnet" id="Q8R105"/>
<dbReference type="PhosphoSitePlus" id="Q8R105"/>
<dbReference type="PaxDb" id="10090-ENSMUSP00000085264"/>
<dbReference type="PeptideAtlas" id="Q8R105"/>
<dbReference type="ProteomicsDB" id="297579">
    <molecule id="Q8R105-1"/>
</dbReference>
<dbReference type="ProteomicsDB" id="297580">
    <molecule id="Q8R105-2"/>
</dbReference>
<dbReference type="Pumba" id="Q8R105"/>
<dbReference type="Antibodypedia" id="28060">
    <property type="antibodies" value="143 antibodies from 28 providers"/>
</dbReference>
<dbReference type="DNASU" id="107305"/>
<dbReference type="Ensembl" id="ENSMUST00000087951.7">
    <molecule id="Q8R105-1"/>
    <property type="protein sequence ID" value="ENSMUSP00000085264.6"/>
    <property type="gene ID" value="ENSMUSG00000048832.10"/>
</dbReference>
<dbReference type="Ensembl" id="ENSMUST00000235927.2">
    <molecule id="Q8R105-1"/>
    <property type="protein sequence ID" value="ENSMUSP00000158500.2"/>
    <property type="gene ID" value="ENSMUSG00000048832.10"/>
</dbReference>
<dbReference type="GeneID" id="107305"/>
<dbReference type="KEGG" id="mmu:107305"/>
<dbReference type="UCSC" id="uc008gqr.1">
    <molecule id="Q8R105-1"/>
    <property type="organism name" value="mouse"/>
</dbReference>
<dbReference type="AGR" id="MGI:2147661"/>
<dbReference type="CTD" id="55048"/>
<dbReference type="MGI" id="MGI:2147661">
    <property type="gene designation" value="Vps37c"/>
</dbReference>
<dbReference type="VEuPathDB" id="HostDB:ENSMUSG00000048832"/>
<dbReference type="eggNOG" id="KOG3270">
    <property type="taxonomic scope" value="Eukaryota"/>
</dbReference>
<dbReference type="GeneTree" id="ENSGT00950000183012"/>
<dbReference type="HOGENOM" id="CLU_067118_0_0_1"/>
<dbReference type="InParanoid" id="Q8R105"/>
<dbReference type="OMA" id="PMYRAGY"/>
<dbReference type="OrthoDB" id="10004364at2759"/>
<dbReference type="PhylomeDB" id="Q8R105"/>
<dbReference type="TreeFam" id="TF321840"/>
<dbReference type="Reactome" id="R-MMU-917729">
    <property type="pathway name" value="Endosomal Sorting Complex Required For Transport (ESCRT)"/>
</dbReference>
<dbReference type="BioGRID-ORCS" id="107305">
    <property type="hits" value="3 hits in 77 CRISPR screens"/>
</dbReference>
<dbReference type="ChiTaRS" id="Vps37c">
    <property type="organism name" value="mouse"/>
</dbReference>
<dbReference type="PRO" id="PR:Q8R105"/>
<dbReference type="Proteomes" id="UP000000589">
    <property type="component" value="Chromosome 19"/>
</dbReference>
<dbReference type="RNAct" id="Q8R105">
    <property type="molecule type" value="protein"/>
</dbReference>
<dbReference type="Bgee" id="ENSMUSG00000048832">
    <property type="expression patterns" value="Expressed in paneth cell and 262 other cell types or tissues"/>
</dbReference>
<dbReference type="ExpressionAtlas" id="Q8R105">
    <property type="expression patterns" value="baseline and differential"/>
</dbReference>
<dbReference type="GO" id="GO:0005929">
    <property type="term" value="C:cilium"/>
    <property type="evidence" value="ECO:0007669"/>
    <property type="project" value="Ensembl"/>
</dbReference>
<dbReference type="GO" id="GO:0000813">
    <property type="term" value="C:ESCRT I complex"/>
    <property type="evidence" value="ECO:0000250"/>
    <property type="project" value="UniProtKB"/>
</dbReference>
<dbReference type="GO" id="GO:0005794">
    <property type="term" value="C:Golgi apparatus"/>
    <property type="evidence" value="ECO:0007669"/>
    <property type="project" value="Ensembl"/>
</dbReference>
<dbReference type="GO" id="GO:0031902">
    <property type="term" value="C:late endosome membrane"/>
    <property type="evidence" value="ECO:0007669"/>
    <property type="project" value="UniProtKB-SubCell"/>
</dbReference>
<dbReference type="GO" id="GO:0005654">
    <property type="term" value="C:nucleoplasm"/>
    <property type="evidence" value="ECO:0007669"/>
    <property type="project" value="Ensembl"/>
</dbReference>
<dbReference type="GO" id="GO:0048306">
    <property type="term" value="F:calcium-dependent protein binding"/>
    <property type="evidence" value="ECO:0007669"/>
    <property type="project" value="Ensembl"/>
</dbReference>
<dbReference type="GO" id="GO:0009056">
    <property type="term" value="P:catabolic process"/>
    <property type="evidence" value="ECO:0007669"/>
    <property type="project" value="UniProtKB-ARBA"/>
</dbReference>
<dbReference type="GO" id="GO:0015031">
    <property type="term" value="P:protein transport"/>
    <property type="evidence" value="ECO:0007669"/>
    <property type="project" value="UniProtKB-KW"/>
</dbReference>
<dbReference type="FunFam" id="1.10.287.660:FF:000003">
    <property type="entry name" value="vacuolar protein sorting-associated protein 37B"/>
    <property type="match status" value="1"/>
</dbReference>
<dbReference type="Gene3D" id="1.10.287.660">
    <property type="entry name" value="Helix hairpin bin"/>
    <property type="match status" value="1"/>
</dbReference>
<dbReference type="InterPro" id="IPR037202">
    <property type="entry name" value="ESCRT_assembly_dom"/>
</dbReference>
<dbReference type="InterPro" id="IPR029012">
    <property type="entry name" value="Helix_hairpin_bin_sf"/>
</dbReference>
<dbReference type="InterPro" id="IPR009851">
    <property type="entry name" value="Mod_r"/>
</dbReference>
<dbReference type="PANTHER" id="PTHR13678">
    <property type="entry name" value="VACUOLAR PROTEIN SORTING-ASSOCIATED PROTEIN 37"/>
    <property type="match status" value="1"/>
</dbReference>
<dbReference type="PANTHER" id="PTHR13678:SF8">
    <property type="entry name" value="VACUOLAR PROTEIN SORTING-ASSOCIATED PROTEIN 37C"/>
    <property type="match status" value="1"/>
</dbReference>
<dbReference type="Pfam" id="PF07200">
    <property type="entry name" value="Mod_r"/>
    <property type="match status" value="1"/>
</dbReference>
<dbReference type="SUPFAM" id="SSF140111">
    <property type="entry name" value="Endosomal sorting complex assembly domain"/>
    <property type="match status" value="1"/>
</dbReference>
<dbReference type="PROSITE" id="PS51314">
    <property type="entry name" value="VPS37_C"/>
    <property type="match status" value="1"/>
</dbReference>
<protein>
    <recommendedName>
        <fullName>Vacuolar protein sorting-associated protein 37C</fullName>
    </recommendedName>
    <alternativeName>
        <fullName>ESCRT-I complex subunit VPS37C</fullName>
    </alternativeName>
</protein>
<accession>Q8R105</accession>
<accession>Q3TY76</accession>
<reference key="1">
    <citation type="journal article" date="2005" name="Science">
        <title>The transcriptional landscape of the mammalian genome.</title>
        <authorList>
            <person name="Carninci P."/>
            <person name="Kasukawa T."/>
            <person name="Katayama S."/>
            <person name="Gough J."/>
            <person name="Frith M.C."/>
            <person name="Maeda N."/>
            <person name="Oyama R."/>
            <person name="Ravasi T."/>
            <person name="Lenhard B."/>
            <person name="Wells C."/>
            <person name="Kodzius R."/>
            <person name="Shimokawa K."/>
            <person name="Bajic V.B."/>
            <person name="Brenner S.E."/>
            <person name="Batalov S."/>
            <person name="Forrest A.R."/>
            <person name="Zavolan M."/>
            <person name="Davis M.J."/>
            <person name="Wilming L.G."/>
            <person name="Aidinis V."/>
            <person name="Allen J.E."/>
            <person name="Ambesi-Impiombato A."/>
            <person name="Apweiler R."/>
            <person name="Aturaliya R.N."/>
            <person name="Bailey T.L."/>
            <person name="Bansal M."/>
            <person name="Baxter L."/>
            <person name="Beisel K.W."/>
            <person name="Bersano T."/>
            <person name="Bono H."/>
            <person name="Chalk A.M."/>
            <person name="Chiu K.P."/>
            <person name="Choudhary V."/>
            <person name="Christoffels A."/>
            <person name="Clutterbuck D.R."/>
            <person name="Crowe M.L."/>
            <person name="Dalla E."/>
            <person name="Dalrymple B.P."/>
            <person name="de Bono B."/>
            <person name="Della Gatta G."/>
            <person name="di Bernardo D."/>
            <person name="Down T."/>
            <person name="Engstrom P."/>
            <person name="Fagiolini M."/>
            <person name="Faulkner G."/>
            <person name="Fletcher C.F."/>
            <person name="Fukushima T."/>
            <person name="Furuno M."/>
            <person name="Futaki S."/>
            <person name="Gariboldi M."/>
            <person name="Georgii-Hemming P."/>
            <person name="Gingeras T.R."/>
            <person name="Gojobori T."/>
            <person name="Green R.E."/>
            <person name="Gustincich S."/>
            <person name="Harbers M."/>
            <person name="Hayashi Y."/>
            <person name="Hensch T.K."/>
            <person name="Hirokawa N."/>
            <person name="Hill D."/>
            <person name="Huminiecki L."/>
            <person name="Iacono M."/>
            <person name="Ikeo K."/>
            <person name="Iwama A."/>
            <person name="Ishikawa T."/>
            <person name="Jakt M."/>
            <person name="Kanapin A."/>
            <person name="Katoh M."/>
            <person name="Kawasawa Y."/>
            <person name="Kelso J."/>
            <person name="Kitamura H."/>
            <person name="Kitano H."/>
            <person name="Kollias G."/>
            <person name="Krishnan S.P."/>
            <person name="Kruger A."/>
            <person name="Kummerfeld S.K."/>
            <person name="Kurochkin I.V."/>
            <person name="Lareau L.F."/>
            <person name="Lazarevic D."/>
            <person name="Lipovich L."/>
            <person name="Liu J."/>
            <person name="Liuni S."/>
            <person name="McWilliam S."/>
            <person name="Madan Babu M."/>
            <person name="Madera M."/>
            <person name="Marchionni L."/>
            <person name="Matsuda H."/>
            <person name="Matsuzawa S."/>
            <person name="Miki H."/>
            <person name="Mignone F."/>
            <person name="Miyake S."/>
            <person name="Morris K."/>
            <person name="Mottagui-Tabar S."/>
            <person name="Mulder N."/>
            <person name="Nakano N."/>
            <person name="Nakauchi H."/>
            <person name="Ng P."/>
            <person name="Nilsson R."/>
            <person name="Nishiguchi S."/>
            <person name="Nishikawa S."/>
            <person name="Nori F."/>
            <person name="Ohara O."/>
            <person name="Okazaki Y."/>
            <person name="Orlando V."/>
            <person name="Pang K.C."/>
            <person name="Pavan W.J."/>
            <person name="Pavesi G."/>
            <person name="Pesole G."/>
            <person name="Petrovsky N."/>
            <person name="Piazza S."/>
            <person name="Reed J."/>
            <person name="Reid J.F."/>
            <person name="Ring B.Z."/>
            <person name="Ringwald M."/>
            <person name="Rost B."/>
            <person name="Ruan Y."/>
            <person name="Salzberg S.L."/>
            <person name="Sandelin A."/>
            <person name="Schneider C."/>
            <person name="Schoenbach C."/>
            <person name="Sekiguchi K."/>
            <person name="Semple C.A."/>
            <person name="Seno S."/>
            <person name="Sessa L."/>
            <person name="Sheng Y."/>
            <person name="Shibata Y."/>
            <person name="Shimada H."/>
            <person name="Shimada K."/>
            <person name="Silva D."/>
            <person name="Sinclair B."/>
            <person name="Sperling S."/>
            <person name="Stupka E."/>
            <person name="Sugiura K."/>
            <person name="Sultana R."/>
            <person name="Takenaka Y."/>
            <person name="Taki K."/>
            <person name="Tammoja K."/>
            <person name="Tan S.L."/>
            <person name="Tang S."/>
            <person name="Taylor M.S."/>
            <person name="Tegner J."/>
            <person name="Teichmann S.A."/>
            <person name="Ueda H.R."/>
            <person name="van Nimwegen E."/>
            <person name="Verardo R."/>
            <person name="Wei C.L."/>
            <person name="Yagi K."/>
            <person name="Yamanishi H."/>
            <person name="Zabarovsky E."/>
            <person name="Zhu S."/>
            <person name="Zimmer A."/>
            <person name="Hide W."/>
            <person name="Bult C."/>
            <person name="Grimmond S.M."/>
            <person name="Teasdale R.D."/>
            <person name="Liu E.T."/>
            <person name="Brusic V."/>
            <person name="Quackenbush J."/>
            <person name="Wahlestedt C."/>
            <person name="Mattick J.S."/>
            <person name="Hume D.A."/>
            <person name="Kai C."/>
            <person name="Sasaki D."/>
            <person name="Tomaru Y."/>
            <person name="Fukuda S."/>
            <person name="Kanamori-Katayama M."/>
            <person name="Suzuki M."/>
            <person name="Aoki J."/>
            <person name="Arakawa T."/>
            <person name="Iida J."/>
            <person name="Imamura K."/>
            <person name="Itoh M."/>
            <person name="Kato T."/>
            <person name="Kawaji H."/>
            <person name="Kawagashira N."/>
            <person name="Kawashima T."/>
            <person name="Kojima M."/>
            <person name="Kondo S."/>
            <person name="Konno H."/>
            <person name="Nakano K."/>
            <person name="Ninomiya N."/>
            <person name="Nishio T."/>
            <person name="Okada M."/>
            <person name="Plessy C."/>
            <person name="Shibata K."/>
            <person name="Shiraki T."/>
            <person name="Suzuki S."/>
            <person name="Tagami M."/>
            <person name="Waki K."/>
            <person name="Watahiki A."/>
            <person name="Okamura-Oho Y."/>
            <person name="Suzuki H."/>
            <person name="Kawai J."/>
            <person name="Hayashizaki Y."/>
        </authorList>
    </citation>
    <scope>NUCLEOTIDE SEQUENCE [LARGE SCALE MRNA] (ISOFORMS 1 AND 2)</scope>
    <source>
        <strain>C57BL/6J</strain>
        <tissue>Visual cortex</tissue>
    </source>
</reference>
<reference key="2">
    <citation type="journal article" date="2004" name="Genome Res.">
        <title>The status, quality, and expansion of the NIH full-length cDNA project: the Mammalian Gene Collection (MGC).</title>
        <authorList>
            <consortium name="The MGC Project Team"/>
        </authorList>
    </citation>
    <scope>NUCLEOTIDE SEQUENCE [LARGE SCALE MRNA] (ISOFORM 1)</scope>
    <source>
        <tissue>Mammary tumor</tissue>
    </source>
</reference>
<reference key="3">
    <citation type="journal article" date="2010" name="Cell">
        <title>A tissue-specific atlas of mouse protein phosphorylation and expression.</title>
        <authorList>
            <person name="Huttlin E.L."/>
            <person name="Jedrychowski M.P."/>
            <person name="Elias J.E."/>
            <person name="Goswami T."/>
            <person name="Rad R."/>
            <person name="Beausoleil S.A."/>
            <person name="Villen J."/>
            <person name="Haas W."/>
            <person name="Sowa M.E."/>
            <person name="Gygi S.P."/>
        </authorList>
    </citation>
    <scope>PHOSPHORYLATION [LARGE SCALE ANALYSIS] AT SER-29</scope>
    <scope>IDENTIFICATION BY MASS SPECTROMETRY [LARGE SCALE ANALYSIS]</scope>
    <source>
        <tissue>Brain</tissue>
        <tissue>Liver</tissue>
        <tissue>Pancreas</tissue>
        <tissue>Spleen</tissue>
        <tissue>Testis</tissue>
    </source>
</reference>
<sequence>MEGLKDKTLQELEEMQNDPEAIARLALESPEVQDLQLEREMALATNRSLAEQNLEFQGPLEISRSNLSDKYQELRKLVERCQEQKAKLEKFSSALQPGTLLDLLQIEGMKIEEESEAMAEKFLEGEVPLETFLESFSSMRTLLHLRRVRVEKLQDVVRRPRALPELAGDVPPKRPPPPRPVPQATPPETEEQPPQPSVVTPYPLPYSPSPGLPVGPTAQGALQPAPFPVVAQPSSYGGPLGPYPSPHPGPRAMVGYSWSPQRSGPPQPGYPTAPTSTSGPGYPLVGGRTPGPGYPQQSPYLPSGNKPPYPTQPQLPGFPGQPQPPVPPQPPYPPGTTPSYGFHPPGPAWPRY</sequence>
<gene>
    <name type="primary">Vps37c</name>
</gene>
<name>VP37C_MOUSE</name>
<comment type="function">
    <text evidence="1">Component of the ESCRT-I complex, a regulator of vesicular trafficking process. Required for the sorting of endocytic ubiquitinated cargos into multivesicular bodies. May be involved in cell growth and differentiation (By similarity).</text>
</comment>
<comment type="subunit">
    <text evidence="1">Component of the ESCRT-I complex (endosomal sorting complex required for transport I) which consists of TSG101, VPS28, a VPS37 protein (VPS37A to -D) and MVB12A or MVB12B in a 1:1:1:1 stoichiometry. Interacts with TSG101, VPS28, MVB12A and MVB12B. Component of the ESCRT-I complex (endosomal sorting complex required for transport I) which consists of TSG101, VPS28, a VPS37 protein (VPS37A to -D) and UBAP1 in a 1:1:1:1 stoichiometry. Interacts with HGS and STAM2. Interacts with CEP55 (By similarity).</text>
</comment>
<comment type="subcellular location">
    <subcellularLocation>
        <location evidence="1">Late endosome membrane</location>
        <topology evidence="1">Peripheral membrane protein</topology>
    </subcellularLocation>
    <text evidence="1">Probably associates with membranes.</text>
</comment>
<comment type="alternative products">
    <event type="alternative splicing"/>
    <isoform>
        <id>Q8R105-1</id>
        <name>1</name>
        <sequence type="displayed"/>
    </isoform>
    <isoform>
        <id>Q8R105-2</id>
        <name>2</name>
        <sequence type="described" ref="VSP_029730"/>
    </isoform>
</comment>
<comment type="PTM">
    <text evidence="1">Phosphorylated by TBK1.</text>
</comment>
<comment type="similarity">
    <text evidence="5">Belongs to the VPS37 family.</text>
</comment>
<feature type="chain" id="PRO_0000312199" description="Vacuolar protein sorting-associated protein 37C">
    <location>
        <begin position="1"/>
        <end position="352"/>
    </location>
</feature>
<feature type="domain" description="VPS37 C-terminal" evidence="2">
    <location>
        <begin position="78"/>
        <end position="167"/>
    </location>
</feature>
<feature type="region of interest" description="Disordered" evidence="3">
    <location>
        <begin position="162"/>
        <end position="352"/>
    </location>
</feature>
<feature type="compositionally biased region" description="Pro residues" evidence="3">
    <location>
        <begin position="173"/>
        <end position="185"/>
    </location>
</feature>
<feature type="compositionally biased region" description="Pro residues" evidence="3">
    <location>
        <begin position="202"/>
        <end position="213"/>
    </location>
</feature>
<feature type="compositionally biased region" description="Pro residues" evidence="3">
    <location>
        <begin position="319"/>
        <end position="336"/>
    </location>
</feature>
<feature type="modified residue" description="Phosphoserine" evidence="6">
    <location>
        <position position="29"/>
    </location>
</feature>
<feature type="splice variant" id="VSP_029730" description="In isoform 2." evidence="4">
    <location>
        <begin position="1"/>
        <end position="108"/>
    </location>
</feature>
<proteinExistence type="evidence at protein level"/>
<organism>
    <name type="scientific">Mus musculus</name>
    <name type="common">Mouse</name>
    <dbReference type="NCBI Taxonomy" id="10090"/>
    <lineage>
        <taxon>Eukaryota</taxon>
        <taxon>Metazoa</taxon>
        <taxon>Chordata</taxon>
        <taxon>Craniata</taxon>
        <taxon>Vertebrata</taxon>
        <taxon>Euteleostomi</taxon>
        <taxon>Mammalia</taxon>
        <taxon>Eutheria</taxon>
        <taxon>Euarchontoglires</taxon>
        <taxon>Glires</taxon>
        <taxon>Rodentia</taxon>
        <taxon>Myomorpha</taxon>
        <taxon>Muroidea</taxon>
        <taxon>Muridae</taxon>
        <taxon>Murinae</taxon>
        <taxon>Mus</taxon>
        <taxon>Mus</taxon>
    </lineage>
</organism>
<keyword id="KW-0025">Alternative splicing</keyword>
<keyword id="KW-0967">Endosome</keyword>
<keyword id="KW-0472">Membrane</keyword>
<keyword id="KW-0597">Phosphoprotein</keyword>
<keyword id="KW-0653">Protein transport</keyword>
<keyword id="KW-1185">Reference proteome</keyword>
<keyword id="KW-0813">Transport</keyword>
<evidence type="ECO:0000250" key="1"/>
<evidence type="ECO:0000255" key="2">
    <source>
        <dbReference type="PROSITE-ProRule" id="PRU00646"/>
    </source>
</evidence>
<evidence type="ECO:0000256" key="3">
    <source>
        <dbReference type="SAM" id="MobiDB-lite"/>
    </source>
</evidence>
<evidence type="ECO:0000303" key="4">
    <source>
    </source>
</evidence>
<evidence type="ECO:0000305" key="5"/>
<evidence type="ECO:0007744" key="6">
    <source>
    </source>
</evidence>